<sequence>MFPARWHNYLQCGQVIKDSNLICFKTPLRPELFAYVTSEEDVWTAEQIVKQNPSIGAIIDLTNTSKYYDGVHFLRAGLLYKKIQVPGQTLPPESIVQEFIDTVKEFTEKCPGMLVGVHCTHGINRTGYMVCRYLMHTLGIAPQEAIDRFEKARGHKIERQNYVQDLLI</sequence>
<reference key="1">
    <citation type="journal article" date="1991" name="J. Gen. Virol.">
        <title>Nucleotide sequence and transcript mapping of the HindIII F region of the Autographa californica nuclear polyhedrosis virus genome.</title>
        <authorList>
            <person name="Tilakaratne N."/>
            <person name="Hardin S.E."/>
            <person name="Weaver R.F."/>
        </authorList>
    </citation>
    <scope>NUCLEOTIDE SEQUENCE [GENOMIC DNA]</scope>
</reference>
<reference key="2">
    <citation type="journal article" date="1991" name="Virology">
        <title>Nucleotide sequence of the Autographa californica nuclear polyhedrosis 9.4 kbp EcoRI-I and -R (polyhedrin gene) region.</title>
        <authorList>
            <person name="Possee R.D."/>
            <person name="Sun T.P."/>
            <person name="Howard S.C."/>
            <person name="Ayres M.D."/>
            <person name="Hill-Perkins M."/>
            <person name="Gearing K.L."/>
        </authorList>
    </citation>
    <scope>NUCLEOTIDE SEQUENCE [GENOMIC DNA]</scope>
    <source>
        <strain>C6</strain>
    </source>
</reference>
<reference key="3">
    <citation type="journal article" date="1994" name="Virology">
        <title>The complete DNA sequence of Autographa californica nuclear polyhedrosis virus.</title>
        <authorList>
            <person name="Ayres M.D."/>
            <person name="Howard S.C."/>
            <person name="Kuzio J."/>
            <person name="Lopez-Ferber M."/>
            <person name="Possee R.D."/>
        </authorList>
    </citation>
    <scope>NUCLEOTIDE SEQUENCE [LARGE SCALE GENOMIC DNA]</scope>
    <source>
        <strain>C6</strain>
    </source>
</reference>
<reference key="4">
    <citation type="journal article" date="1993" name="J. Biol. Chem.">
        <title>The baculovirus Autographa californica encodes a protein tyrosine phosphatase.</title>
        <authorList>
            <person name="Sheng Z."/>
            <person name="Charbonneau H."/>
        </authorList>
    </citation>
    <scope>CHARACTERIZATION</scope>
</reference>
<reference key="5">
    <citation type="journal article" date="1998" name="Proc. Natl. Acad. Sci. U.S.A.">
        <title>A protein tyrosine phosphatase-like protein from baculovirus has RNA 5'-triphosphatase and diphosphatase activities.</title>
        <authorList>
            <person name="Takagi T."/>
            <person name="Taylor G.S."/>
            <person name="Kusakabe T."/>
            <person name="Charbonneau H."/>
            <person name="Buratowski S."/>
        </authorList>
    </citation>
    <scope>FUNCTION</scope>
    <scope>MUTAGENESIS OF CYS-119</scope>
</reference>
<reference key="6">
    <citation type="journal article" date="2008" name="J. Virol.">
        <title>Roles of LEF-4 and PTP/BVP RNA triphosphatases in processing of baculovirus late mRNAs.</title>
        <authorList>
            <person name="Li Y."/>
            <person name="Guarino L.A."/>
        </authorList>
    </citation>
    <scope>FUNCTION</scope>
</reference>
<reference key="7">
    <citation type="journal article" date="2005" name="J. Biol. Chem.">
        <title>Crystal structure of baculovirus RNA triphosphatase complexed with phosphate.</title>
        <authorList>
            <person name="Changela A."/>
            <person name="Martins A."/>
            <person name="Shuman S."/>
            <person name="Mondragon A."/>
        </authorList>
    </citation>
    <scope>X-RAY CRYSTALLOGRAPHY (1.50 ANGSTROMS)</scope>
    <scope>MUTAGENESIS OF ASN-124</scope>
</reference>
<keyword id="KW-0002">3D-structure</keyword>
<keyword id="KW-0378">Hydrolase</keyword>
<keyword id="KW-0426">Late protein</keyword>
<keyword id="KW-0904">Protein phosphatase</keyword>
<keyword id="KW-1185">Reference proteome</keyword>
<accession>P24656</accession>
<protein>
    <recommendedName>
        <fullName>Tyrosine-protein phosphatase</fullName>
        <ecNumber>3.1.3.48</ecNumber>
    </recommendedName>
    <alternativeName>
        <fullName>BVP</fullName>
    </alternativeName>
</protein>
<feature type="chain" id="PRO_0000094881" description="Tyrosine-protein phosphatase">
    <location>
        <begin position="1"/>
        <end position="168"/>
    </location>
</feature>
<feature type="domain" description="Tyrosine-protein phosphatase" evidence="1">
    <location>
        <begin position="24"/>
        <end position="168"/>
    </location>
</feature>
<feature type="active site" description="Phosphocysteine intermediate" evidence="1">
    <location>
        <position position="119"/>
    </location>
</feature>
<feature type="site" description="Essential for RNA triphosphatase activity" evidence="3">
    <location>
        <position position="124"/>
    </location>
</feature>
<feature type="mutagenesis site" description="Loss of activity." evidence="5">
    <original>C</original>
    <variation>S</variation>
    <location>
        <position position="119"/>
    </location>
</feature>
<feature type="mutagenesis site" description="Abolishes triphosphatase activity." evidence="3">
    <original>N</original>
    <variation>A</variation>
    <location>
        <position position="124"/>
    </location>
</feature>
<feature type="mutagenesis site" description="Abolishes triphosphatase activity." evidence="3">
    <original>N</original>
    <variation>D</variation>
    <location>
        <position position="124"/>
    </location>
</feature>
<feature type="mutagenesis site" description="Abolishes triphosphatase activity." evidence="3">
    <original>N</original>
    <variation>Q</variation>
    <location>
        <position position="124"/>
    </location>
</feature>
<feature type="sequence conflict" description="In Ref. 1." evidence="6" ref="1">
    <original>V</original>
    <variation>I</variation>
    <location>
        <position position="49"/>
    </location>
</feature>
<feature type="sequence conflict" description="In Ref. 1." evidence="6" ref="1">
    <original>LI</original>
    <variation>F</variation>
    <location>
        <begin position="167"/>
        <end position="168"/>
    </location>
</feature>
<feature type="helix" evidence="7">
    <location>
        <begin position="6"/>
        <end position="8"/>
    </location>
</feature>
<feature type="strand" evidence="7">
    <location>
        <begin position="19"/>
        <end position="24"/>
    </location>
</feature>
<feature type="helix" evidence="7">
    <location>
        <begin position="30"/>
        <end position="33"/>
    </location>
</feature>
<feature type="helix" evidence="7">
    <location>
        <begin position="39"/>
        <end position="41"/>
    </location>
</feature>
<feature type="helix" evidence="7">
    <location>
        <begin position="45"/>
        <end position="51"/>
    </location>
</feature>
<feature type="strand" evidence="7">
    <location>
        <begin position="55"/>
        <end position="60"/>
    </location>
</feature>
<feature type="helix" evidence="7">
    <location>
        <begin position="71"/>
        <end position="75"/>
    </location>
</feature>
<feature type="strand" evidence="7">
    <location>
        <begin position="79"/>
        <end position="82"/>
    </location>
</feature>
<feature type="strand" evidence="7">
    <location>
        <begin position="87"/>
        <end position="89"/>
    </location>
</feature>
<feature type="helix" evidence="7">
    <location>
        <begin position="93"/>
        <end position="109"/>
    </location>
</feature>
<feature type="strand" evidence="7">
    <location>
        <begin position="113"/>
        <end position="118"/>
    </location>
</feature>
<feature type="strand" evidence="7">
    <location>
        <begin position="120"/>
        <end position="123"/>
    </location>
</feature>
<feature type="helix" evidence="7">
    <location>
        <begin position="124"/>
        <end position="138"/>
    </location>
</feature>
<feature type="helix" evidence="7">
    <location>
        <begin position="142"/>
        <end position="153"/>
    </location>
</feature>
<feature type="helix" evidence="7">
    <location>
        <begin position="160"/>
        <end position="167"/>
    </location>
</feature>
<organism>
    <name type="scientific">Autographa californica nuclear polyhedrosis virus</name>
    <name type="common">AcMNPV</name>
    <dbReference type="NCBI Taxonomy" id="46015"/>
    <lineage>
        <taxon>Viruses</taxon>
        <taxon>Viruses incertae sedis</taxon>
        <taxon>Naldaviricetes</taxon>
        <taxon>Lefavirales</taxon>
        <taxon>Baculoviridae</taxon>
        <taxon>Alphabaculovirus</taxon>
        <taxon>Alphabaculovirus aucalifornicae</taxon>
    </lineage>
</organism>
<comment type="function">
    <text evidence="4 5">Plays a role in the regulation and processing of late viral mRNAs by displaying RNA 5'-triphosphatase and diphosphatase activities.</text>
</comment>
<comment type="catalytic activity">
    <reaction evidence="2">
        <text>O-phospho-L-tyrosyl-[protein] + H2O = L-tyrosyl-[protein] + phosphate</text>
        <dbReference type="Rhea" id="RHEA:10684"/>
        <dbReference type="Rhea" id="RHEA-COMP:10136"/>
        <dbReference type="Rhea" id="RHEA-COMP:20101"/>
        <dbReference type="ChEBI" id="CHEBI:15377"/>
        <dbReference type="ChEBI" id="CHEBI:43474"/>
        <dbReference type="ChEBI" id="CHEBI:46858"/>
        <dbReference type="ChEBI" id="CHEBI:61978"/>
        <dbReference type="EC" id="3.1.3.48"/>
    </reaction>
</comment>
<comment type="miscellaneous">
    <text>Probably expressed late in infection.</text>
</comment>
<comment type="similarity">
    <text evidence="6">Belongs to the protein-tyrosine phosphatase family. Non-receptor class CDC14 subfamily.</text>
</comment>
<name>PTP_NPVAC</name>
<organismHost>
    <name type="scientific">Lepidoptera</name>
    <name type="common">butterflies and moths</name>
    <dbReference type="NCBI Taxonomy" id="7088"/>
</organismHost>
<proteinExistence type="evidence at protein level"/>
<dbReference type="EC" id="3.1.3.48"/>
<dbReference type="EMBL" id="L22858">
    <property type="protein sequence ID" value="AAA66631.1"/>
    <property type="molecule type" value="Genomic_DNA"/>
</dbReference>
<dbReference type="EMBL" id="M96763">
    <property type="protein sequence ID" value="AAA46753.1"/>
    <property type="molecule type" value="Genomic_DNA"/>
</dbReference>
<dbReference type="EMBL" id="M75679">
    <property type="status" value="NOT_ANNOTATED_CDS"/>
    <property type="molecule type" value="Genomic_DNA"/>
</dbReference>
<dbReference type="PIR" id="A40781">
    <property type="entry name" value="A40781"/>
</dbReference>
<dbReference type="PDB" id="1YN9">
    <property type="method" value="X-ray"/>
    <property type="resolution" value="1.50 A"/>
    <property type="chains" value="A/B/C=1-168"/>
</dbReference>
<dbReference type="PDBsum" id="1YN9"/>
<dbReference type="SMR" id="P24656"/>
<dbReference type="KEGG" id="vg:1403833"/>
<dbReference type="OrthoDB" id="10871at10239"/>
<dbReference type="EvolutionaryTrace" id="P24656"/>
<dbReference type="Proteomes" id="UP000008292">
    <property type="component" value="Segment"/>
</dbReference>
<dbReference type="GO" id="GO:0004651">
    <property type="term" value="F:polynucleotide 5'-phosphatase activity"/>
    <property type="evidence" value="ECO:0007669"/>
    <property type="project" value="TreeGrafter"/>
</dbReference>
<dbReference type="GO" id="GO:0004725">
    <property type="term" value="F:protein tyrosine phosphatase activity"/>
    <property type="evidence" value="ECO:0007669"/>
    <property type="project" value="UniProtKB-EC"/>
</dbReference>
<dbReference type="CDD" id="cd17665">
    <property type="entry name" value="DSP_DUSP11"/>
    <property type="match status" value="1"/>
</dbReference>
<dbReference type="Gene3D" id="3.90.190.10">
    <property type="entry name" value="Protein tyrosine phosphatase superfamily"/>
    <property type="match status" value="1"/>
</dbReference>
<dbReference type="InterPro" id="IPR000340">
    <property type="entry name" value="Dual-sp_phosphatase_cat-dom"/>
</dbReference>
<dbReference type="InterPro" id="IPR051029">
    <property type="entry name" value="mRNA_Capping_Enz/RNA_Phosphat"/>
</dbReference>
<dbReference type="InterPro" id="IPR029021">
    <property type="entry name" value="Prot-tyrosine_phosphatase-like"/>
</dbReference>
<dbReference type="InterPro" id="IPR016130">
    <property type="entry name" value="Tyr_Pase_AS"/>
</dbReference>
<dbReference type="InterPro" id="IPR000387">
    <property type="entry name" value="Tyr_Pase_dom"/>
</dbReference>
<dbReference type="InterPro" id="IPR020422">
    <property type="entry name" value="TYR_PHOSPHATASE_DUAL_dom"/>
</dbReference>
<dbReference type="PANTHER" id="PTHR10367:SF9">
    <property type="entry name" value="DUAL-SPECIFICITY PHOSPHATASE 11 (RNA_RNP COMPLEX 1-INTERACTING)"/>
    <property type="match status" value="1"/>
</dbReference>
<dbReference type="PANTHER" id="PTHR10367">
    <property type="entry name" value="MRNA-CAPPING ENZYME"/>
    <property type="match status" value="1"/>
</dbReference>
<dbReference type="Pfam" id="PF00782">
    <property type="entry name" value="DSPc"/>
    <property type="match status" value="1"/>
</dbReference>
<dbReference type="SMART" id="SM00195">
    <property type="entry name" value="DSPc"/>
    <property type="match status" value="1"/>
</dbReference>
<dbReference type="SUPFAM" id="SSF52799">
    <property type="entry name" value="(Phosphotyrosine protein) phosphatases II"/>
    <property type="match status" value="1"/>
</dbReference>
<dbReference type="PROSITE" id="PS00383">
    <property type="entry name" value="TYR_PHOSPHATASE_1"/>
    <property type="match status" value="1"/>
</dbReference>
<dbReference type="PROSITE" id="PS50056">
    <property type="entry name" value="TYR_PHOSPHATASE_2"/>
    <property type="match status" value="1"/>
</dbReference>
<dbReference type="PROSITE" id="PS50054">
    <property type="entry name" value="TYR_PHOSPHATASE_DUAL"/>
    <property type="match status" value="1"/>
</dbReference>
<gene>
    <name type="primary">PTP</name>
    <name type="ORF">ORF1</name>
</gene>
<evidence type="ECO:0000255" key="1">
    <source>
        <dbReference type="PROSITE-ProRule" id="PRU00160"/>
    </source>
</evidence>
<evidence type="ECO:0000255" key="2">
    <source>
        <dbReference type="PROSITE-ProRule" id="PRU10044"/>
    </source>
</evidence>
<evidence type="ECO:0000269" key="3">
    <source>
    </source>
</evidence>
<evidence type="ECO:0000269" key="4">
    <source>
    </source>
</evidence>
<evidence type="ECO:0000269" key="5">
    <source>
    </source>
</evidence>
<evidence type="ECO:0000305" key="6"/>
<evidence type="ECO:0007829" key="7">
    <source>
        <dbReference type="PDB" id="1YN9"/>
    </source>
</evidence>